<protein>
    <recommendedName>
        <fullName>Mitochondrial uncoupling protein 4</fullName>
        <shortName>UCP 4</shortName>
    </recommendedName>
    <alternativeName>
        <fullName>Solute carrier family 25, member 27</fullName>
    </alternativeName>
</protein>
<keyword id="KW-0966">Cell projection</keyword>
<keyword id="KW-0472">Membrane</keyword>
<keyword id="KW-0496">Mitochondrion</keyword>
<keyword id="KW-0999">Mitochondrion inner membrane</keyword>
<keyword id="KW-1185">Reference proteome</keyword>
<keyword id="KW-0677">Repeat</keyword>
<keyword id="KW-0812">Transmembrane</keyword>
<keyword id="KW-1133">Transmembrane helix</keyword>
<keyword id="KW-0813">Transport</keyword>
<dbReference type="EMBL" id="AB106930">
    <property type="protein sequence ID" value="BAC66453.1"/>
    <property type="molecule type" value="mRNA"/>
</dbReference>
<dbReference type="EMBL" id="AK014394">
    <property type="protein sequence ID" value="BAB29320.1"/>
    <property type="molecule type" value="mRNA"/>
</dbReference>
<dbReference type="EMBL" id="AK043831">
    <property type="protein sequence ID" value="BAC31670.1"/>
    <property type="molecule type" value="mRNA"/>
</dbReference>
<dbReference type="EMBL" id="BC138993">
    <property type="protein sequence ID" value="AAI38994.1"/>
    <property type="molecule type" value="mRNA"/>
</dbReference>
<dbReference type="EMBL" id="BC138994">
    <property type="protein sequence ID" value="AAI38995.1"/>
    <property type="molecule type" value="mRNA"/>
</dbReference>
<dbReference type="CCDS" id="CCDS28798.1"/>
<dbReference type="RefSeq" id="NP_082987.1">
    <property type="nucleotide sequence ID" value="NM_028711.4"/>
</dbReference>
<dbReference type="SMR" id="Q9D6D0"/>
<dbReference type="FunCoup" id="Q9D6D0">
    <property type="interactions" value="652"/>
</dbReference>
<dbReference type="STRING" id="10090.ENSMUSP00000024705"/>
<dbReference type="GlyGen" id="Q9D6D0">
    <property type="glycosylation" value="2 sites, 1 O-linked glycan (1 site)"/>
</dbReference>
<dbReference type="iPTMnet" id="Q9D6D0"/>
<dbReference type="PhosphoSitePlus" id="Q9D6D0"/>
<dbReference type="PaxDb" id="10090-ENSMUSP00000024705"/>
<dbReference type="PeptideAtlas" id="Q9D6D0"/>
<dbReference type="ProteomicsDB" id="339327"/>
<dbReference type="Antibodypedia" id="4016">
    <property type="antibodies" value="87 antibodies from 23 providers"/>
</dbReference>
<dbReference type="DNASU" id="74011"/>
<dbReference type="Ensembl" id="ENSMUST00000024705.6">
    <property type="protein sequence ID" value="ENSMUSP00000024705.5"/>
    <property type="gene ID" value="ENSMUSG00000023912.11"/>
</dbReference>
<dbReference type="GeneID" id="74011"/>
<dbReference type="KEGG" id="mmu:74011"/>
<dbReference type="UCSC" id="uc008cpk.1">
    <property type="organism name" value="mouse"/>
</dbReference>
<dbReference type="AGR" id="MGI:1921261"/>
<dbReference type="CTD" id="9481"/>
<dbReference type="MGI" id="MGI:1921261">
    <property type="gene designation" value="Slc25a27"/>
</dbReference>
<dbReference type="VEuPathDB" id="HostDB:ENSMUSG00000023912"/>
<dbReference type="eggNOG" id="KOG0753">
    <property type="taxonomic scope" value="Eukaryota"/>
</dbReference>
<dbReference type="GeneTree" id="ENSGT00940000160098"/>
<dbReference type="HOGENOM" id="CLU_015166_14_2_1"/>
<dbReference type="OMA" id="FPFWKAV"/>
<dbReference type="OrthoDB" id="756301at2759"/>
<dbReference type="TreeFam" id="TF354328"/>
<dbReference type="Reactome" id="R-MMU-167826">
    <property type="pathway name" value="The fatty acid cycling model"/>
</dbReference>
<dbReference type="BioGRID-ORCS" id="74011">
    <property type="hits" value="0 hits in 76 CRISPR screens"/>
</dbReference>
<dbReference type="ChiTaRS" id="Slc25a27">
    <property type="organism name" value="mouse"/>
</dbReference>
<dbReference type="PRO" id="PR:Q9D6D0"/>
<dbReference type="Proteomes" id="UP000000589">
    <property type="component" value="Chromosome 17"/>
</dbReference>
<dbReference type="RNAct" id="Q9D6D0">
    <property type="molecule type" value="protein"/>
</dbReference>
<dbReference type="Bgee" id="ENSMUSG00000023912">
    <property type="expression patterns" value="Expressed in rostral migratory stream and 212 other cell types or tissues"/>
</dbReference>
<dbReference type="ExpressionAtlas" id="Q9D6D0">
    <property type="expression patterns" value="baseline and differential"/>
</dbReference>
<dbReference type="GO" id="GO:0045177">
    <property type="term" value="C:apical part of cell"/>
    <property type="evidence" value="ECO:0007669"/>
    <property type="project" value="Ensembl"/>
</dbReference>
<dbReference type="GO" id="GO:0005743">
    <property type="term" value="C:mitochondrial inner membrane"/>
    <property type="evidence" value="ECO:0000314"/>
    <property type="project" value="UniProtKB"/>
</dbReference>
<dbReference type="GO" id="GO:0005739">
    <property type="term" value="C:mitochondrion"/>
    <property type="evidence" value="ECO:0000314"/>
    <property type="project" value="MGI"/>
</dbReference>
<dbReference type="GO" id="GO:0043005">
    <property type="term" value="C:neuron projection"/>
    <property type="evidence" value="ECO:0007669"/>
    <property type="project" value="UniProtKB-SubCell"/>
</dbReference>
<dbReference type="GO" id="GO:0043025">
    <property type="term" value="C:neuronal cell body"/>
    <property type="evidence" value="ECO:0007669"/>
    <property type="project" value="Ensembl"/>
</dbReference>
<dbReference type="GO" id="GO:0015108">
    <property type="term" value="F:chloride transmembrane transporter activity"/>
    <property type="evidence" value="ECO:0007669"/>
    <property type="project" value="Ensembl"/>
</dbReference>
<dbReference type="GO" id="GO:0042803">
    <property type="term" value="F:protein homodimerization activity"/>
    <property type="evidence" value="ECO:0007669"/>
    <property type="project" value="Ensembl"/>
</dbReference>
<dbReference type="GO" id="GO:0015078">
    <property type="term" value="F:proton transmembrane transporter activity"/>
    <property type="evidence" value="ECO:0007669"/>
    <property type="project" value="Ensembl"/>
</dbReference>
<dbReference type="GO" id="GO:0048839">
    <property type="term" value="P:inner ear development"/>
    <property type="evidence" value="ECO:0007669"/>
    <property type="project" value="Ensembl"/>
</dbReference>
<dbReference type="GO" id="GO:0035356">
    <property type="term" value="P:intracellular triglyceride homeostasis"/>
    <property type="evidence" value="ECO:0007669"/>
    <property type="project" value="Ensembl"/>
</dbReference>
<dbReference type="GO" id="GO:0051562">
    <property type="term" value="P:negative regulation of mitochondrial calcium ion concentration"/>
    <property type="evidence" value="ECO:0007669"/>
    <property type="project" value="Ensembl"/>
</dbReference>
<dbReference type="GO" id="GO:0010917">
    <property type="term" value="P:negative regulation of mitochondrial membrane potential"/>
    <property type="evidence" value="ECO:0007669"/>
    <property type="project" value="Ensembl"/>
</dbReference>
<dbReference type="GO" id="GO:0043524">
    <property type="term" value="P:negative regulation of neuron apoptotic process"/>
    <property type="evidence" value="ECO:0000315"/>
    <property type="project" value="MGI"/>
</dbReference>
<dbReference type="GO" id="GO:0008284">
    <property type="term" value="P:positive regulation of cell population proliferation"/>
    <property type="evidence" value="ECO:0007669"/>
    <property type="project" value="Ensembl"/>
</dbReference>
<dbReference type="GO" id="GO:0046324">
    <property type="term" value="P:regulation of D-glucose import"/>
    <property type="evidence" value="ECO:0007669"/>
    <property type="project" value="Ensembl"/>
</dbReference>
<dbReference type="FunFam" id="1.50.40.10:FF:000020">
    <property type="entry name" value="mitochondrial uncoupling protein 4 isoform X1"/>
    <property type="match status" value="1"/>
</dbReference>
<dbReference type="Gene3D" id="1.50.40.10">
    <property type="entry name" value="Mitochondrial carrier domain"/>
    <property type="match status" value="1"/>
</dbReference>
<dbReference type="InterPro" id="IPR050391">
    <property type="entry name" value="Mito_Metabolite_Transporter"/>
</dbReference>
<dbReference type="InterPro" id="IPR018108">
    <property type="entry name" value="Mitochondrial_sb/sol_carrier"/>
</dbReference>
<dbReference type="InterPro" id="IPR023395">
    <property type="entry name" value="Mt_carrier_dom_sf"/>
</dbReference>
<dbReference type="PANTHER" id="PTHR45618">
    <property type="entry name" value="MITOCHONDRIAL DICARBOXYLATE CARRIER-RELATED"/>
    <property type="match status" value="1"/>
</dbReference>
<dbReference type="Pfam" id="PF00153">
    <property type="entry name" value="Mito_carr"/>
    <property type="match status" value="3"/>
</dbReference>
<dbReference type="SUPFAM" id="SSF103506">
    <property type="entry name" value="Mitochondrial carrier"/>
    <property type="match status" value="1"/>
</dbReference>
<dbReference type="PROSITE" id="PS50920">
    <property type="entry name" value="SOLCAR"/>
    <property type="match status" value="3"/>
</dbReference>
<organism>
    <name type="scientific">Mus musculus</name>
    <name type="common">Mouse</name>
    <dbReference type="NCBI Taxonomy" id="10090"/>
    <lineage>
        <taxon>Eukaryota</taxon>
        <taxon>Metazoa</taxon>
        <taxon>Chordata</taxon>
        <taxon>Craniata</taxon>
        <taxon>Vertebrata</taxon>
        <taxon>Euteleostomi</taxon>
        <taxon>Mammalia</taxon>
        <taxon>Eutheria</taxon>
        <taxon>Euarchontoglires</taxon>
        <taxon>Glires</taxon>
        <taxon>Rodentia</taxon>
        <taxon>Myomorpha</taxon>
        <taxon>Muroidea</taxon>
        <taxon>Muridae</taxon>
        <taxon>Murinae</taxon>
        <taxon>Mus</taxon>
        <taxon>Mus</taxon>
    </lineage>
</organism>
<evidence type="ECO:0000250" key="1">
    <source>
        <dbReference type="UniProtKB" id="O95847"/>
    </source>
</evidence>
<evidence type="ECO:0000255" key="2"/>
<evidence type="ECO:0000255" key="3">
    <source>
        <dbReference type="PROSITE-ProRule" id="PRU00282"/>
    </source>
</evidence>
<evidence type="ECO:0000269" key="4">
    <source>
    </source>
</evidence>
<evidence type="ECO:0000269" key="5">
    <source>
    </source>
</evidence>
<evidence type="ECO:0000303" key="6">
    <source>
    </source>
</evidence>
<evidence type="ECO:0000305" key="7"/>
<evidence type="ECO:0000312" key="8">
    <source>
        <dbReference type="MGI" id="MGI:1921261"/>
    </source>
</evidence>
<proteinExistence type="evidence at transcript level"/>
<accession>Q9D6D0</accession>
<comment type="function">
    <text evidence="1 4">Facilitates proton transport across the inner mitochondrial membrane and may dissipate excessive proton gradient associated with oxidative and metabolic stress at neuronal synapses. Regulates glutamate-induced proton conductance in astrocytes, shifting the energy metabolism toward aerobic glycolysis and lactate transfer to neurons for ATP synthesis. Can transport chloride ions with lower efficiency. The transport mechanism remains to be elucidated.</text>
</comment>
<comment type="catalytic activity">
    <reaction evidence="1">
        <text>H(+)(in) = H(+)(out)</text>
        <dbReference type="Rhea" id="RHEA:34979"/>
        <dbReference type="ChEBI" id="CHEBI:15378"/>
    </reaction>
</comment>
<comment type="catalytic activity">
    <reaction evidence="1">
        <text>chloride(in) = chloride(out)</text>
        <dbReference type="Rhea" id="RHEA:29823"/>
        <dbReference type="ChEBI" id="CHEBI:17996"/>
    </reaction>
</comment>
<comment type="subunit">
    <text evidence="1">Homotetramer.</text>
</comment>
<comment type="subcellular location">
    <subcellularLocation>
        <location evidence="4 5">Mitochondrion inner membrane</location>
        <topology evidence="2">Multi-pass membrane protein</topology>
    </subcellularLocation>
    <subcellularLocation>
        <location evidence="5">Cell projection</location>
        <location evidence="5">Neuron projection</location>
    </subcellularLocation>
    <text evidence="5">Localizes to neuronal cell body and processes. Within mitochondrial inner membrane, it is mainly observed in the inner boundary membrane locally separated from F(1)F(0) ATP synthase, which is preferentially localized in cristae.</text>
</comment>
<comment type="similarity">
    <text evidence="7">Belongs to the mitochondrial carrier (TC 2.A.29) family.</text>
</comment>
<sequence>MPIAEEEKLLPLTQRWPRTSKFLLSGCAATVAELATFPLDLTKTRLQMQGEAALARLGDGAVDSAPYRGMVRTALGIVQEEGFLKLWQGVTPAIYRHVVYSGGRMVTYEHLREVVFGKSEDKHYPLWKSVIGGMMAGVIGQFLANPTDLVKVQMQMEGKRRLEGKPLRFRGVHHAFAKILAEGGIRGLWAGWIPNIQRAALVNMGDLTTYDTVKHYLVLNTPLEDNISTHGLSSLCSGLVASILGTPADVIKSRIMNQPRDKQGRGLLYKSSADCLIQAVQGEGFLSLYKGFLPSWLRMTPWSMVFWLTYEKIREMSGVSPF</sequence>
<gene>
    <name evidence="8" type="primary">Slc25a27</name>
    <name evidence="6" type="synonym">UCP4</name>
</gene>
<reference key="1">
    <citation type="submission" date="2003-03" db="EMBL/GenBank/DDBJ databases">
        <title>Molecular cloning of mouse UCP4 cDNA.</title>
        <authorList>
            <person name="Hitomi Y."/>
            <person name="Moriya S."/>
            <person name="Matsushita K."/>
            <person name="Tanaka H."/>
        </authorList>
    </citation>
    <scope>NUCLEOTIDE SEQUENCE [MRNA]</scope>
    <source>
        <strain>ICR</strain>
        <tissue>Brain</tissue>
    </source>
</reference>
<reference key="2">
    <citation type="journal article" date="2005" name="Science">
        <title>The transcriptional landscape of the mammalian genome.</title>
        <authorList>
            <person name="Carninci P."/>
            <person name="Kasukawa T."/>
            <person name="Katayama S."/>
            <person name="Gough J."/>
            <person name="Frith M.C."/>
            <person name="Maeda N."/>
            <person name="Oyama R."/>
            <person name="Ravasi T."/>
            <person name="Lenhard B."/>
            <person name="Wells C."/>
            <person name="Kodzius R."/>
            <person name="Shimokawa K."/>
            <person name="Bajic V.B."/>
            <person name="Brenner S.E."/>
            <person name="Batalov S."/>
            <person name="Forrest A.R."/>
            <person name="Zavolan M."/>
            <person name="Davis M.J."/>
            <person name="Wilming L.G."/>
            <person name="Aidinis V."/>
            <person name="Allen J.E."/>
            <person name="Ambesi-Impiombato A."/>
            <person name="Apweiler R."/>
            <person name="Aturaliya R.N."/>
            <person name="Bailey T.L."/>
            <person name="Bansal M."/>
            <person name="Baxter L."/>
            <person name="Beisel K.W."/>
            <person name="Bersano T."/>
            <person name="Bono H."/>
            <person name="Chalk A.M."/>
            <person name="Chiu K.P."/>
            <person name="Choudhary V."/>
            <person name="Christoffels A."/>
            <person name="Clutterbuck D.R."/>
            <person name="Crowe M.L."/>
            <person name="Dalla E."/>
            <person name="Dalrymple B.P."/>
            <person name="de Bono B."/>
            <person name="Della Gatta G."/>
            <person name="di Bernardo D."/>
            <person name="Down T."/>
            <person name="Engstrom P."/>
            <person name="Fagiolini M."/>
            <person name="Faulkner G."/>
            <person name="Fletcher C.F."/>
            <person name="Fukushima T."/>
            <person name="Furuno M."/>
            <person name="Futaki S."/>
            <person name="Gariboldi M."/>
            <person name="Georgii-Hemming P."/>
            <person name="Gingeras T.R."/>
            <person name="Gojobori T."/>
            <person name="Green R.E."/>
            <person name="Gustincich S."/>
            <person name="Harbers M."/>
            <person name="Hayashi Y."/>
            <person name="Hensch T.K."/>
            <person name="Hirokawa N."/>
            <person name="Hill D."/>
            <person name="Huminiecki L."/>
            <person name="Iacono M."/>
            <person name="Ikeo K."/>
            <person name="Iwama A."/>
            <person name="Ishikawa T."/>
            <person name="Jakt M."/>
            <person name="Kanapin A."/>
            <person name="Katoh M."/>
            <person name="Kawasawa Y."/>
            <person name="Kelso J."/>
            <person name="Kitamura H."/>
            <person name="Kitano H."/>
            <person name="Kollias G."/>
            <person name="Krishnan S.P."/>
            <person name="Kruger A."/>
            <person name="Kummerfeld S.K."/>
            <person name="Kurochkin I.V."/>
            <person name="Lareau L.F."/>
            <person name="Lazarevic D."/>
            <person name="Lipovich L."/>
            <person name="Liu J."/>
            <person name="Liuni S."/>
            <person name="McWilliam S."/>
            <person name="Madan Babu M."/>
            <person name="Madera M."/>
            <person name="Marchionni L."/>
            <person name="Matsuda H."/>
            <person name="Matsuzawa S."/>
            <person name="Miki H."/>
            <person name="Mignone F."/>
            <person name="Miyake S."/>
            <person name="Morris K."/>
            <person name="Mottagui-Tabar S."/>
            <person name="Mulder N."/>
            <person name="Nakano N."/>
            <person name="Nakauchi H."/>
            <person name="Ng P."/>
            <person name="Nilsson R."/>
            <person name="Nishiguchi S."/>
            <person name="Nishikawa S."/>
            <person name="Nori F."/>
            <person name="Ohara O."/>
            <person name="Okazaki Y."/>
            <person name="Orlando V."/>
            <person name="Pang K.C."/>
            <person name="Pavan W.J."/>
            <person name="Pavesi G."/>
            <person name="Pesole G."/>
            <person name="Petrovsky N."/>
            <person name="Piazza S."/>
            <person name="Reed J."/>
            <person name="Reid J.F."/>
            <person name="Ring B.Z."/>
            <person name="Ringwald M."/>
            <person name="Rost B."/>
            <person name="Ruan Y."/>
            <person name="Salzberg S.L."/>
            <person name="Sandelin A."/>
            <person name="Schneider C."/>
            <person name="Schoenbach C."/>
            <person name="Sekiguchi K."/>
            <person name="Semple C.A."/>
            <person name="Seno S."/>
            <person name="Sessa L."/>
            <person name="Sheng Y."/>
            <person name="Shibata Y."/>
            <person name="Shimada H."/>
            <person name="Shimada K."/>
            <person name="Silva D."/>
            <person name="Sinclair B."/>
            <person name="Sperling S."/>
            <person name="Stupka E."/>
            <person name="Sugiura K."/>
            <person name="Sultana R."/>
            <person name="Takenaka Y."/>
            <person name="Taki K."/>
            <person name="Tammoja K."/>
            <person name="Tan S.L."/>
            <person name="Tang S."/>
            <person name="Taylor M.S."/>
            <person name="Tegner J."/>
            <person name="Teichmann S.A."/>
            <person name="Ueda H.R."/>
            <person name="van Nimwegen E."/>
            <person name="Verardo R."/>
            <person name="Wei C.L."/>
            <person name="Yagi K."/>
            <person name="Yamanishi H."/>
            <person name="Zabarovsky E."/>
            <person name="Zhu S."/>
            <person name="Zimmer A."/>
            <person name="Hide W."/>
            <person name="Bult C."/>
            <person name="Grimmond S.M."/>
            <person name="Teasdale R.D."/>
            <person name="Liu E.T."/>
            <person name="Brusic V."/>
            <person name="Quackenbush J."/>
            <person name="Wahlestedt C."/>
            <person name="Mattick J.S."/>
            <person name="Hume D.A."/>
            <person name="Kai C."/>
            <person name="Sasaki D."/>
            <person name="Tomaru Y."/>
            <person name="Fukuda S."/>
            <person name="Kanamori-Katayama M."/>
            <person name="Suzuki M."/>
            <person name="Aoki J."/>
            <person name="Arakawa T."/>
            <person name="Iida J."/>
            <person name="Imamura K."/>
            <person name="Itoh M."/>
            <person name="Kato T."/>
            <person name="Kawaji H."/>
            <person name="Kawagashira N."/>
            <person name="Kawashima T."/>
            <person name="Kojima M."/>
            <person name="Kondo S."/>
            <person name="Konno H."/>
            <person name="Nakano K."/>
            <person name="Ninomiya N."/>
            <person name="Nishio T."/>
            <person name="Okada M."/>
            <person name="Plessy C."/>
            <person name="Shibata K."/>
            <person name="Shiraki T."/>
            <person name="Suzuki S."/>
            <person name="Tagami M."/>
            <person name="Waki K."/>
            <person name="Watahiki A."/>
            <person name="Okamura-Oho Y."/>
            <person name="Suzuki H."/>
            <person name="Kawai J."/>
            <person name="Hayashizaki Y."/>
        </authorList>
    </citation>
    <scope>NUCLEOTIDE SEQUENCE [LARGE SCALE MRNA]</scope>
    <source>
        <strain>C57BL/6J</strain>
    </source>
</reference>
<reference key="3">
    <citation type="journal article" date="2004" name="Genome Res.">
        <title>The status, quality, and expansion of the NIH full-length cDNA project: the Mammalian Gene Collection (MGC).</title>
        <authorList>
            <consortium name="The MGC Project Team"/>
        </authorList>
    </citation>
    <scope>NUCLEOTIDE SEQUENCE [LARGE SCALE MRNA]</scope>
    <source>
        <strain>FVB/N</strain>
        <tissue>Brain</tissue>
    </source>
</reference>
<reference key="4">
    <citation type="journal article" date="2014" name="J. Biol. Chem.">
        <title>Control of mitochondrial pH by uncoupling protein 4 in astrocytes promotes neuronal survival.</title>
        <authorList>
            <person name="Perreten Lambert H."/>
            <person name="Zenger M."/>
            <person name="Azarias G."/>
            <person name="Chatton J.Y."/>
            <person name="Magistretti P.J."/>
            <person name="Lengacher S."/>
        </authorList>
    </citation>
    <scope>FUNCTION</scope>
    <scope>SUBCELLULAR LOCATION</scope>
</reference>
<reference key="5">
    <citation type="journal article" date="2015" name="Proc. Natl. Acad. Sci. U.S.A.">
        <title>Superresolution microscopy reveals spatial separation of UCP4 and F0F1-ATP synthase in neuronal mitochondria.</title>
        <authorList>
            <person name="Klotzsch E."/>
            <person name="Smorodchenko A."/>
            <person name="Loefler L."/>
            <person name="Moldzio R."/>
            <person name="Parkinson E."/>
            <person name="Schuetz G.J."/>
            <person name="Pohl E.E."/>
        </authorList>
    </citation>
    <scope>SUBCELLULAR LOCATION</scope>
</reference>
<feature type="chain" id="PRO_0000458774" description="Mitochondrial uncoupling protein 4">
    <location>
        <begin position="1"/>
        <end position="322"/>
    </location>
</feature>
<feature type="transmembrane region" description="Helical; Name=1" evidence="2">
    <location>
        <begin position="22"/>
        <end position="39"/>
    </location>
</feature>
<feature type="transmembrane region" description="Helical; Name=2" evidence="2">
    <location>
        <begin position="87"/>
        <end position="108"/>
    </location>
</feature>
<feature type="transmembrane region" description="Helical; Name=3" evidence="2">
    <location>
        <begin position="126"/>
        <end position="143"/>
    </location>
</feature>
<feature type="transmembrane region" description="Helical; Name=4" evidence="2">
    <location>
        <begin position="194"/>
        <end position="211"/>
    </location>
</feature>
<feature type="transmembrane region" description="Helical; Name=5" evidence="2">
    <location>
        <begin position="228"/>
        <end position="247"/>
    </location>
</feature>
<feature type="transmembrane region" description="Helical; Name=6" evidence="2">
    <location>
        <begin position="287"/>
        <end position="310"/>
    </location>
</feature>
<feature type="repeat" description="Solcar 1" evidence="3">
    <location>
        <begin position="20"/>
        <end position="114"/>
    </location>
</feature>
<feature type="repeat" description="Solcar 2" evidence="3">
    <location>
        <begin position="124"/>
        <end position="216"/>
    </location>
</feature>
<feature type="repeat" description="Solcar 3" evidence="3">
    <location>
        <begin position="225"/>
        <end position="316"/>
    </location>
</feature>
<name>UCP4_MOUSE</name>